<keyword id="KW-0963">Cytoplasm</keyword>
<keyword id="KW-0520">NAD</keyword>
<keyword id="KW-0521">NADP</keyword>
<keyword id="KW-0560">Oxidoreductase</keyword>
<reference key="1">
    <citation type="journal article" date="2006" name="J. Bacteriol.">
        <title>Complete genome sequence of Yersinia pestis strains Antiqua and Nepal516: evidence of gene reduction in an emerging pathogen.</title>
        <authorList>
            <person name="Chain P.S.G."/>
            <person name="Hu P."/>
            <person name="Malfatti S.A."/>
            <person name="Radnedge L."/>
            <person name="Larimer F."/>
            <person name="Vergez L.M."/>
            <person name="Worsham P."/>
            <person name="Chu M.C."/>
            <person name="Andersen G.L."/>
        </authorList>
    </citation>
    <scope>NUCLEOTIDE SEQUENCE [LARGE SCALE GENOMIC DNA]</scope>
    <source>
        <strain>Antiqua</strain>
    </source>
</reference>
<proteinExistence type="inferred from homology"/>
<sequence length="326" mass="35465">MKPSIVLYKSIPTDLHQRLAQHFTVNSFDGLTPDNQPELLAALQQAEGLIGSGGKIDQDFLQLAPNLRAASTISVGYDNFDVEALSQRGIALMHTPTVLTETVADTMMALMLSTARRVVELAERVKAGEWQESIGDDWFGVDVHHKTIGILGMGRIGMALAQRAHFGFSMPVLYTSRRPHEAAEQRFGARHCSLDTLLAEADFLCITLPMTEQTYHMIGREQLAKMKSSAILINAGRGPVVDEQALIAALQDGTIHAAGLDVFEQEPLPVDSPLLTLRNVVAVPHIGSATHETRYNMAACAVDNLINALTGTVKENCVNPQVLITH</sequence>
<dbReference type="EC" id="1.1.1.79" evidence="1"/>
<dbReference type="EC" id="1.1.1.81" evidence="1"/>
<dbReference type="EMBL" id="CP000308">
    <property type="protein sequence ID" value="ABG14968.1"/>
    <property type="molecule type" value="Genomic_DNA"/>
</dbReference>
<dbReference type="PIR" id="AF0495">
    <property type="entry name" value="AF0495"/>
</dbReference>
<dbReference type="RefSeq" id="WP_002209630.1">
    <property type="nucleotide sequence ID" value="NZ_CP009906.1"/>
</dbReference>
<dbReference type="SMR" id="Q1C3K4"/>
<dbReference type="GeneID" id="57974639"/>
<dbReference type="KEGG" id="ypa:YPA_3006"/>
<dbReference type="Proteomes" id="UP000001971">
    <property type="component" value="Chromosome"/>
</dbReference>
<dbReference type="GO" id="GO:0005829">
    <property type="term" value="C:cytosol"/>
    <property type="evidence" value="ECO:0007669"/>
    <property type="project" value="TreeGrafter"/>
</dbReference>
<dbReference type="GO" id="GO:0005886">
    <property type="term" value="C:plasma membrane"/>
    <property type="evidence" value="ECO:0007669"/>
    <property type="project" value="UniProtKB-UniRule"/>
</dbReference>
<dbReference type="GO" id="GO:0030267">
    <property type="term" value="F:glyoxylate reductase (NADPH) activity"/>
    <property type="evidence" value="ECO:0007669"/>
    <property type="project" value="UniProtKB-UniRule"/>
</dbReference>
<dbReference type="GO" id="GO:0008465">
    <property type="term" value="F:hydroxypyruvate reductase (NADH) activity"/>
    <property type="evidence" value="ECO:0007669"/>
    <property type="project" value="RHEA"/>
</dbReference>
<dbReference type="GO" id="GO:0120509">
    <property type="term" value="F:hydroxypyruvate reductase (NADPH) activity"/>
    <property type="evidence" value="ECO:0007669"/>
    <property type="project" value="RHEA"/>
</dbReference>
<dbReference type="GO" id="GO:0051287">
    <property type="term" value="F:NAD binding"/>
    <property type="evidence" value="ECO:0007669"/>
    <property type="project" value="InterPro"/>
</dbReference>
<dbReference type="CDD" id="cd05301">
    <property type="entry name" value="GDH"/>
    <property type="match status" value="1"/>
</dbReference>
<dbReference type="FunFam" id="3.40.50.720:FF:000026">
    <property type="entry name" value="Glyoxylate/hydroxypyruvate reductase B"/>
    <property type="match status" value="1"/>
</dbReference>
<dbReference type="Gene3D" id="3.40.50.720">
    <property type="entry name" value="NAD(P)-binding Rossmann-like Domain"/>
    <property type="match status" value="2"/>
</dbReference>
<dbReference type="HAMAP" id="MF_01667">
    <property type="entry name" value="2_Hacid_dh_C_GhrB"/>
    <property type="match status" value="1"/>
</dbReference>
<dbReference type="InterPro" id="IPR050223">
    <property type="entry name" value="D-isomer_2-hydroxyacid_DH"/>
</dbReference>
<dbReference type="InterPro" id="IPR006139">
    <property type="entry name" value="D-isomer_2_OHA_DH_cat_dom"/>
</dbReference>
<dbReference type="InterPro" id="IPR029753">
    <property type="entry name" value="D-isomer_DH_CS"/>
</dbReference>
<dbReference type="InterPro" id="IPR029752">
    <property type="entry name" value="D-isomer_DH_CS1"/>
</dbReference>
<dbReference type="InterPro" id="IPR006140">
    <property type="entry name" value="D-isomer_DH_NAD-bd"/>
</dbReference>
<dbReference type="InterPro" id="IPR023756">
    <property type="entry name" value="Glyo/OHPyrv_Rdtase_B"/>
</dbReference>
<dbReference type="InterPro" id="IPR036291">
    <property type="entry name" value="NAD(P)-bd_dom_sf"/>
</dbReference>
<dbReference type="NCBIfam" id="NF011938">
    <property type="entry name" value="PRK15409.1"/>
    <property type="match status" value="1"/>
</dbReference>
<dbReference type="PANTHER" id="PTHR10996">
    <property type="entry name" value="2-HYDROXYACID DEHYDROGENASE-RELATED"/>
    <property type="match status" value="1"/>
</dbReference>
<dbReference type="PANTHER" id="PTHR10996:SF283">
    <property type="entry name" value="GLYOXYLATE_HYDROXYPYRUVATE REDUCTASE B"/>
    <property type="match status" value="1"/>
</dbReference>
<dbReference type="Pfam" id="PF00389">
    <property type="entry name" value="2-Hacid_dh"/>
    <property type="match status" value="1"/>
</dbReference>
<dbReference type="Pfam" id="PF02826">
    <property type="entry name" value="2-Hacid_dh_C"/>
    <property type="match status" value="1"/>
</dbReference>
<dbReference type="SUPFAM" id="SSF52283">
    <property type="entry name" value="Formate/glycerate dehydrogenase catalytic domain-like"/>
    <property type="match status" value="1"/>
</dbReference>
<dbReference type="SUPFAM" id="SSF51735">
    <property type="entry name" value="NAD(P)-binding Rossmann-fold domains"/>
    <property type="match status" value="1"/>
</dbReference>
<dbReference type="PROSITE" id="PS00065">
    <property type="entry name" value="D_2_HYDROXYACID_DH_1"/>
    <property type="match status" value="1"/>
</dbReference>
<dbReference type="PROSITE" id="PS00671">
    <property type="entry name" value="D_2_HYDROXYACID_DH_3"/>
    <property type="match status" value="1"/>
</dbReference>
<gene>
    <name evidence="1" type="primary">ghrB</name>
    <name type="ordered locus">YPA_3006</name>
</gene>
<organism>
    <name type="scientific">Yersinia pestis bv. Antiqua (strain Antiqua)</name>
    <dbReference type="NCBI Taxonomy" id="360102"/>
    <lineage>
        <taxon>Bacteria</taxon>
        <taxon>Pseudomonadati</taxon>
        <taxon>Pseudomonadota</taxon>
        <taxon>Gammaproteobacteria</taxon>
        <taxon>Enterobacterales</taxon>
        <taxon>Yersiniaceae</taxon>
        <taxon>Yersinia</taxon>
    </lineage>
</organism>
<feature type="chain" id="PRO_0000348409" description="Glyoxylate/hydroxypyruvate reductase B">
    <location>
        <begin position="1"/>
        <end position="326"/>
    </location>
</feature>
<feature type="active site" evidence="1">
    <location>
        <position position="237"/>
    </location>
</feature>
<feature type="active site" evidence="1">
    <location>
        <position position="266"/>
    </location>
</feature>
<feature type="active site" description="Proton donor" evidence="1">
    <location>
        <position position="285"/>
    </location>
</feature>
<evidence type="ECO:0000255" key="1">
    <source>
        <dbReference type="HAMAP-Rule" id="MF_01667"/>
    </source>
</evidence>
<name>GHRB_YERPA</name>
<protein>
    <recommendedName>
        <fullName evidence="1">Glyoxylate/hydroxypyruvate reductase B</fullName>
        <ecNumber evidence="1">1.1.1.79</ecNumber>
        <ecNumber evidence="1">1.1.1.81</ecNumber>
    </recommendedName>
</protein>
<accession>Q1C3K4</accession>
<comment type="function">
    <text evidence="1">Catalyzes the NADPH-dependent reduction of glyoxylate and hydroxypyruvate into glycolate and glycerate, respectively.</text>
</comment>
<comment type="catalytic activity">
    <reaction evidence="1">
        <text>glycolate + NADP(+) = glyoxylate + NADPH + H(+)</text>
        <dbReference type="Rhea" id="RHEA:10992"/>
        <dbReference type="ChEBI" id="CHEBI:15378"/>
        <dbReference type="ChEBI" id="CHEBI:29805"/>
        <dbReference type="ChEBI" id="CHEBI:36655"/>
        <dbReference type="ChEBI" id="CHEBI:57783"/>
        <dbReference type="ChEBI" id="CHEBI:58349"/>
        <dbReference type="EC" id="1.1.1.79"/>
    </reaction>
</comment>
<comment type="catalytic activity">
    <reaction evidence="1">
        <text>(R)-glycerate + NAD(+) = 3-hydroxypyruvate + NADH + H(+)</text>
        <dbReference type="Rhea" id="RHEA:17905"/>
        <dbReference type="ChEBI" id="CHEBI:15378"/>
        <dbReference type="ChEBI" id="CHEBI:16659"/>
        <dbReference type="ChEBI" id="CHEBI:17180"/>
        <dbReference type="ChEBI" id="CHEBI:57540"/>
        <dbReference type="ChEBI" id="CHEBI:57945"/>
        <dbReference type="EC" id="1.1.1.81"/>
    </reaction>
</comment>
<comment type="catalytic activity">
    <reaction evidence="1">
        <text>(R)-glycerate + NADP(+) = 3-hydroxypyruvate + NADPH + H(+)</text>
        <dbReference type="Rhea" id="RHEA:18657"/>
        <dbReference type="ChEBI" id="CHEBI:15378"/>
        <dbReference type="ChEBI" id="CHEBI:16659"/>
        <dbReference type="ChEBI" id="CHEBI:17180"/>
        <dbReference type="ChEBI" id="CHEBI:57783"/>
        <dbReference type="ChEBI" id="CHEBI:58349"/>
        <dbReference type="EC" id="1.1.1.81"/>
    </reaction>
</comment>
<comment type="subunit">
    <text evidence="1">Homodimer.</text>
</comment>
<comment type="subcellular location">
    <subcellularLocation>
        <location evidence="1">Cytoplasm</location>
    </subcellularLocation>
</comment>
<comment type="similarity">
    <text evidence="1">Belongs to the D-isomer specific 2-hydroxyacid dehydrogenase family. GhrB subfamily.</text>
</comment>